<organism>
    <name type="scientific">Androctonus crassicauda</name>
    <name type="common">Arabian fat-tailed scorpion</name>
    <dbReference type="NCBI Taxonomy" id="122909"/>
    <lineage>
        <taxon>Eukaryota</taxon>
        <taxon>Metazoa</taxon>
        <taxon>Ecdysozoa</taxon>
        <taxon>Arthropoda</taxon>
        <taxon>Chelicerata</taxon>
        <taxon>Arachnida</taxon>
        <taxon>Scorpiones</taxon>
        <taxon>Buthida</taxon>
        <taxon>Buthoidea</taxon>
        <taxon>Buthidae</taxon>
        <taxon>Androctonus</taxon>
    </lineage>
</organism>
<protein>
    <recommendedName>
        <fullName>Putative sodium channel alpha-toxin Acra5</fullName>
    </recommendedName>
</protein>
<proteinExistence type="inferred from homology"/>
<name>SCX5_ANDCR</name>
<feature type="chain" id="PRO_5001112794" description="Putative sodium channel alpha-toxin Acra5">
    <location>
        <begin position="1"/>
        <end position="66"/>
    </location>
</feature>
<feature type="propeptide" id="PRO_0000432478" description="Removed by a carboxypeptidase" evidence="2">
    <location>
        <position position="67"/>
    </location>
</feature>
<feature type="domain" description="LCN-type CS-alpha/beta" evidence="3">
    <location>
        <begin position="2"/>
        <end position="65"/>
    </location>
</feature>
<feature type="disulfide bond" evidence="3">
    <location>
        <begin position="13"/>
        <end position="64"/>
    </location>
</feature>
<feature type="disulfide bond" evidence="3">
    <location>
        <begin position="17"/>
        <end position="40"/>
    </location>
</feature>
<feature type="disulfide bond" evidence="3">
    <location>
        <begin position="26"/>
        <end position="45"/>
    </location>
</feature>
<feature type="disulfide bond" evidence="3">
    <location>
        <begin position="30"/>
        <end position="47"/>
    </location>
</feature>
<sequence length="67" mass="7747">VRDGYIMIKDTNCKFSCNIFKKWEYCSPLCQSKGAETGYCYNFGCWCLDLPDDVPVYGDRGVICRTR</sequence>
<accession>M1J7U4</accession>
<reference key="1">
    <citation type="journal article" date="2013" name="Biochimie">
        <title>Molecular cloning and biochemical characterization of the first Na(+)-channel alpha-type toxin peptide (Acra4) from Androctonus crassicauda scorpion venom.</title>
        <authorList>
            <person name="Caliskan F."/>
            <person name="Quintero-Hernandez V."/>
            <person name="Restano-Cassulini R."/>
            <person name="Coronas-Valderrama F.I."/>
            <person name="Corzo G."/>
            <person name="Possani L.D."/>
        </authorList>
    </citation>
    <scope>NUCLEOTIDE SEQUENCE [MRNA]</scope>
    <source>
        <tissue>Venom gland</tissue>
    </source>
</reference>
<keyword id="KW-1015">Disulfide bond</keyword>
<keyword id="KW-0872">Ion channel impairing toxin</keyword>
<keyword id="KW-0528">Neurotoxin</keyword>
<keyword id="KW-0964">Secreted</keyword>
<keyword id="KW-0800">Toxin</keyword>
<keyword id="KW-0738">Voltage-gated sodium channel impairing toxin</keyword>
<evidence type="ECO:0000250" key="1"/>
<evidence type="ECO:0000250" key="2">
    <source>
        <dbReference type="UniProtKB" id="P01480"/>
    </source>
</evidence>
<evidence type="ECO:0000255" key="3">
    <source>
        <dbReference type="PROSITE-ProRule" id="PRU01210"/>
    </source>
</evidence>
<evidence type="ECO:0000305" key="4"/>
<dbReference type="EMBL" id="JQ975127">
    <property type="protein sequence ID" value="AGE83104.1"/>
    <property type="molecule type" value="mRNA"/>
</dbReference>
<dbReference type="SMR" id="M1J7U4"/>
<dbReference type="GO" id="GO:0005576">
    <property type="term" value="C:extracellular region"/>
    <property type="evidence" value="ECO:0007669"/>
    <property type="project" value="UniProtKB-SubCell"/>
</dbReference>
<dbReference type="GO" id="GO:0019871">
    <property type="term" value="F:sodium channel inhibitor activity"/>
    <property type="evidence" value="ECO:0007669"/>
    <property type="project" value="InterPro"/>
</dbReference>
<dbReference type="GO" id="GO:0090729">
    <property type="term" value="F:toxin activity"/>
    <property type="evidence" value="ECO:0007669"/>
    <property type="project" value="UniProtKB-KW"/>
</dbReference>
<dbReference type="GO" id="GO:0006952">
    <property type="term" value="P:defense response"/>
    <property type="evidence" value="ECO:0007669"/>
    <property type="project" value="InterPro"/>
</dbReference>
<dbReference type="CDD" id="cd23106">
    <property type="entry name" value="neurotoxins_LC_scorpion"/>
    <property type="match status" value="1"/>
</dbReference>
<dbReference type="Gene3D" id="3.30.30.10">
    <property type="entry name" value="Knottin, scorpion toxin-like"/>
    <property type="match status" value="1"/>
</dbReference>
<dbReference type="InterPro" id="IPR044062">
    <property type="entry name" value="LCN-type_CS_alpha_beta_dom"/>
</dbReference>
<dbReference type="InterPro" id="IPR003614">
    <property type="entry name" value="Scorpion_toxin-like"/>
</dbReference>
<dbReference type="InterPro" id="IPR036574">
    <property type="entry name" value="Scorpion_toxin-like_sf"/>
</dbReference>
<dbReference type="InterPro" id="IPR018218">
    <property type="entry name" value="Scorpion_toxinL"/>
</dbReference>
<dbReference type="InterPro" id="IPR002061">
    <property type="entry name" value="Scorpion_toxinL/defensin"/>
</dbReference>
<dbReference type="Pfam" id="PF00537">
    <property type="entry name" value="Toxin_3"/>
    <property type="match status" value="1"/>
</dbReference>
<dbReference type="PRINTS" id="PR00285">
    <property type="entry name" value="SCORPNTOXIN"/>
</dbReference>
<dbReference type="SMART" id="SM00505">
    <property type="entry name" value="Knot1"/>
    <property type="match status" value="1"/>
</dbReference>
<dbReference type="SUPFAM" id="SSF57095">
    <property type="entry name" value="Scorpion toxin-like"/>
    <property type="match status" value="1"/>
</dbReference>
<dbReference type="PROSITE" id="PS51863">
    <property type="entry name" value="LCN_CSAB"/>
    <property type="match status" value="1"/>
</dbReference>
<comment type="function">
    <text evidence="1">Alpha toxins bind voltage-independently at site-3 of sodium channels (Nav) and inhibit the inactivation of the activated channels, thereby blocking neuronal transmission.</text>
</comment>
<comment type="subcellular location">
    <subcellularLocation>
        <location evidence="1">Secreted</location>
    </subcellularLocation>
</comment>
<comment type="tissue specificity">
    <text evidence="4">Expressed by the venom gland.</text>
</comment>
<comment type="domain">
    <text evidence="4">Has the structural arrangement of an alpha-helix connected to antiparallel beta-sheets by disulfide bonds (CS-alpha/beta).</text>
</comment>
<comment type="similarity">
    <text evidence="4">Belongs to the long (4 C-C) scorpion toxin superfamily. Sodium channel inhibitor family. Alpha subfamily.</text>
</comment>